<comment type="function">
    <text evidence="1">May be involved in microtubule organization and stabilization.</text>
</comment>
<comment type="subunit">
    <text evidence="1">Oligomerization is required for binding to microtubules.</text>
</comment>
<comment type="subcellular location">
    <subcellularLocation>
        <location evidence="1">Cytoplasm</location>
        <location evidence="1">Cytoskeleton</location>
        <location evidence="1">Microtubule organizing center</location>
        <location evidence="1">Centrosome</location>
    </subcellularLocation>
    <subcellularLocation>
        <location evidence="1">Nucleus</location>
    </subcellularLocation>
    <subcellularLocation>
        <location evidence="1">Cytoplasm</location>
    </subcellularLocation>
    <subcellularLocation>
        <location evidence="1">Cleavage furrow</location>
    </subcellularLocation>
    <text evidence="1">Cell-cycle-dependent association with the centrosome. Colocalizes with a subpopulation of microtubules. Does not associate with microtubules during mitosis but reassociates with microtubules during cytokinesis. Localizes to the central portions of a small subset of microtubules in interphase cells and a subpopulation of microtubules in the cleavage furrow, not present in the mitotic spindle (By similarity).</text>
</comment>
<comment type="domain">
    <text>B30.2 box contains a microtubule-binding site.</text>
</comment>
<name>FSD1_BOVIN</name>
<keyword id="KW-0131">Cell cycle</keyword>
<keyword id="KW-0132">Cell division</keyword>
<keyword id="KW-0175">Coiled coil</keyword>
<keyword id="KW-0963">Cytoplasm</keyword>
<keyword id="KW-0206">Cytoskeleton</keyword>
<keyword id="KW-0488">Methylation</keyword>
<keyword id="KW-0493">Microtubule</keyword>
<keyword id="KW-0498">Mitosis</keyword>
<keyword id="KW-0539">Nucleus</keyword>
<keyword id="KW-1185">Reference proteome</keyword>
<protein>
    <recommendedName>
        <fullName>Fibronectin type III and SPRY domain-containing protein 1</fullName>
    </recommendedName>
</protein>
<gene>
    <name type="primary">FSD1</name>
</gene>
<accession>Q05B84</accession>
<dbReference type="EMBL" id="BC122630">
    <property type="protein sequence ID" value="AAI22631.1"/>
    <property type="molecule type" value="mRNA"/>
</dbReference>
<dbReference type="RefSeq" id="NP_001074987.1">
    <property type="nucleotide sequence ID" value="NM_001081518.1"/>
</dbReference>
<dbReference type="FunCoup" id="Q05B84">
    <property type="interactions" value="1364"/>
</dbReference>
<dbReference type="STRING" id="9913.ENSBTAP00000007877"/>
<dbReference type="PaxDb" id="9913-ENSBTAP00000007877"/>
<dbReference type="GeneID" id="510595"/>
<dbReference type="KEGG" id="bta:510595"/>
<dbReference type="CTD" id="79187"/>
<dbReference type="VEuPathDB" id="HostDB:ENSBTAG00000005999"/>
<dbReference type="eggNOG" id="KOG2177">
    <property type="taxonomic scope" value="Eukaryota"/>
</dbReference>
<dbReference type="HOGENOM" id="CLU_013137_19_1_1"/>
<dbReference type="InParanoid" id="Q05B84"/>
<dbReference type="OrthoDB" id="9927450at2759"/>
<dbReference type="TreeFam" id="TF333654"/>
<dbReference type="Proteomes" id="UP000009136">
    <property type="component" value="Chromosome 7"/>
</dbReference>
<dbReference type="Bgee" id="ENSBTAG00000005999">
    <property type="expression patterns" value="Expressed in Ammon's horn and 65 other cell types or tissues"/>
</dbReference>
<dbReference type="GO" id="GO:0005813">
    <property type="term" value="C:centrosome"/>
    <property type="evidence" value="ECO:0007669"/>
    <property type="project" value="UniProtKB-SubCell"/>
</dbReference>
<dbReference type="GO" id="GO:0032154">
    <property type="term" value="C:cleavage furrow"/>
    <property type="evidence" value="ECO:0007669"/>
    <property type="project" value="UniProtKB-SubCell"/>
</dbReference>
<dbReference type="GO" id="GO:0005737">
    <property type="term" value="C:cytoplasm"/>
    <property type="evidence" value="ECO:0007669"/>
    <property type="project" value="UniProtKB-SubCell"/>
</dbReference>
<dbReference type="GO" id="GO:0005874">
    <property type="term" value="C:microtubule"/>
    <property type="evidence" value="ECO:0000318"/>
    <property type="project" value="GO_Central"/>
</dbReference>
<dbReference type="GO" id="GO:0005634">
    <property type="term" value="C:nucleus"/>
    <property type="evidence" value="ECO:0007669"/>
    <property type="project" value="UniProtKB-SubCell"/>
</dbReference>
<dbReference type="GO" id="GO:0008017">
    <property type="term" value="F:microtubule binding"/>
    <property type="evidence" value="ECO:0000318"/>
    <property type="project" value="GO_Central"/>
</dbReference>
<dbReference type="GO" id="GO:0051301">
    <property type="term" value="P:cell division"/>
    <property type="evidence" value="ECO:0007669"/>
    <property type="project" value="UniProtKB-KW"/>
</dbReference>
<dbReference type="GO" id="GO:0051302">
    <property type="term" value="P:regulation of cell division"/>
    <property type="evidence" value="ECO:0000318"/>
    <property type="project" value="GO_Central"/>
</dbReference>
<dbReference type="GO" id="GO:0060236">
    <property type="term" value="P:regulation of mitotic spindle organization"/>
    <property type="evidence" value="ECO:0000318"/>
    <property type="project" value="GO_Central"/>
</dbReference>
<dbReference type="CDD" id="cd00063">
    <property type="entry name" value="FN3"/>
    <property type="match status" value="1"/>
</dbReference>
<dbReference type="CDD" id="cd12901">
    <property type="entry name" value="SPRY_PRY_FSD1"/>
    <property type="match status" value="1"/>
</dbReference>
<dbReference type="FunFam" id="2.60.120.920:FF:000034">
    <property type="entry name" value="Fibronectin type III and SPRY domain-containing protein 1"/>
    <property type="match status" value="1"/>
</dbReference>
<dbReference type="FunFam" id="1.20.5.170:FF:000064">
    <property type="entry name" value="fibronectin type III and SPRY domain-containing protein 1"/>
    <property type="match status" value="1"/>
</dbReference>
<dbReference type="FunFam" id="2.60.40.10:FF:000566">
    <property type="entry name" value="fibronectin type III and SPRY domain-containing protein 1"/>
    <property type="match status" value="1"/>
</dbReference>
<dbReference type="Gene3D" id="1.20.5.170">
    <property type="match status" value="1"/>
</dbReference>
<dbReference type="Gene3D" id="2.60.120.920">
    <property type="match status" value="1"/>
</dbReference>
<dbReference type="Gene3D" id="2.60.40.10">
    <property type="entry name" value="Immunoglobulins"/>
    <property type="match status" value="1"/>
</dbReference>
<dbReference type="InterPro" id="IPR001870">
    <property type="entry name" value="B30.2/SPRY"/>
</dbReference>
<dbReference type="InterPro" id="IPR043136">
    <property type="entry name" value="B30.2/SPRY_sf"/>
</dbReference>
<dbReference type="InterPro" id="IPR003649">
    <property type="entry name" value="Bbox_C"/>
</dbReference>
<dbReference type="InterPro" id="IPR003879">
    <property type="entry name" value="Butyrophylin_SPRY"/>
</dbReference>
<dbReference type="InterPro" id="IPR013320">
    <property type="entry name" value="ConA-like_dom_sf"/>
</dbReference>
<dbReference type="InterPro" id="IPR017903">
    <property type="entry name" value="COS_domain"/>
</dbReference>
<dbReference type="InterPro" id="IPR050617">
    <property type="entry name" value="E3_ligase_FN3/SPRY"/>
</dbReference>
<dbReference type="InterPro" id="IPR003961">
    <property type="entry name" value="FN3_dom"/>
</dbReference>
<dbReference type="InterPro" id="IPR036116">
    <property type="entry name" value="FN3_sf"/>
</dbReference>
<dbReference type="InterPro" id="IPR013783">
    <property type="entry name" value="Ig-like_fold"/>
</dbReference>
<dbReference type="InterPro" id="IPR035742">
    <property type="entry name" value="SPRY/PRY_FSD1"/>
</dbReference>
<dbReference type="InterPro" id="IPR003877">
    <property type="entry name" value="SPRY_dom"/>
</dbReference>
<dbReference type="PANTHER" id="PTHR24099">
    <property type="entry name" value="E3 UBIQUITIN-PROTEIN LIGASE TRIM36-RELATED"/>
    <property type="match status" value="1"/>
</dbReference>
<dbReference type="PANTHER" id="PTHR24099:SF4">
    <property type="entry name" value="FIBRONECTIN TYPE III AND SPRY DOMAIN-CONTAINING PROTEIN 1"/>
    <property type="match status" value="1"/>
</dbReference>
<dbReference type="Pfam" id="PF00041">
    <property type="entry name" value="fn3"/>
    <property type="match status" value="1"/>
</dbReference>
<dbReference type="Pfam" id="PF00622">
    <property type="entry name" value="SPRY"/>
    <property type="match status" value="1"/>
</dbReference>
<dbReference type="PRINTS" id="PR01407">
    <property type="entry name" value="BUTYPHLNCDUF"/>
</dbReference>
<dbReference type="SMART" id="SM00502">
    <property type="entry name" value="BBC"/>
    <property type="match status" value="1"/>
</dbReference>
<dbReference type="SMART" id="SM00060">
    <property type="entry name" value="FN3"/>
    <property type="match status" value="1"/>
</dbReference>
<dbReference type="SMART" id="SM00449">
    <property type="entry name" value="SPRY"/>
    <property type="match status" value="1"/>
</dbReference>
<dbReference type="SUPFAM" id="SSF49899">
    <property type="entry name" value="Concanavalin A-like lectins/glucanases"/>
    <property type="match status" value="1"/>
</dbReference>
<dbReference type="SUPFAM" id="SSF49265">
    <property type="entry name" value="Fibronectin type III"/>
    <property type="match status" value="1"/>
</dbReference>
<dbReference type="PROSITE" id="PS50188">
    <property type="entry name" value="B302_SPRY"/>
    <property type="match status" value="1"/>
</dbReference>
<dbReference type="PROSITE" id="PS51262">
    <property type="entry name" value="COS"/>
    <property type="match status" value="1"/>
</dbReference>
<dbReference type="PROSITE" id="PS50853">
    <property type="entry name" value="FN3"/>
    <property type="match status" value="1"/>
</dbReference>
<sequence>MEDQKEALRKIITTLAVKNEEIQSFIYSLKQMLLNVEANSAKVQEDLEAEFQSLFSLLEELKEGMLMKIKQDRASRTYELQNQLAACTRALESSEELLETANQTLLATDSKDFPQAAKQIKDGVTMAPAFRLSLKAKVSDNMSHLMVDFAQERRMLQALTFLPVPSAPVIDLTESLVADNCVTLVWRMPDEDNKIDHFVLEYRRTNFEGPPRLKEDQPWMVIEGIRQTEYTLTGLKFDMKYMNFRVKACNKAVSGEFSEPVTLETPAFMFRLDASTSHQNLRVDDLSVEWDAMGGKVQDIKAREKDGKGRTASPVNSPARGTPSPKRMPSGRGGRDRFTAESYTVLGDTLIDGGEHYWEVRYEPDSKAFGVGVAYRSLGRFEQLGKTAASWCLHVNNWLQVSFTAKHANKAKMLDAPVPDCLGVHCDFHQGLLSFYNGRTKQLLHTFKAKFTQPLLPAFTVWCGSFHVTTGLQVPSSVRCLQKRGSATSSSNTSLT</sequence>
<evidence type="ECO:0000250" key="1"/>
<evidence type="ECO:0000250" key="2">
    <source>
        <dbReference type="UniProtKB" id="Q7TPM6"/>
    </source>
</evidence>
<evidence type="ECO:0000250" key="3">
    <source>
        <dbReference type="UniProtKB" id="Q9BTV5"/>
    </source>
</evidence>
<evidence type="ECO:0000255" key="4"/>
<evidence type="ECO:0000255" key="5">
    <source>
        <dbReference type="PROSITE-ProRule" id="PRU00316"/>
    </source>
</evidence>
<evidence type="ECO:0000255" key="6">
    <source>
        <dbReference type="PROSITE-ProRule" id="PRU00548"/>
    </source>
</evidence>
<evidence type="ECO:0000255" key="7">
    <source>
        <dbReference type="PROSITE-ProRule" id="PRU00586"/>
    </source>
</evidence>
<evidence type="ECO:0000256" key="8">
    <source>
        <dbReference type="SAM" id="MobiDB-lite"/>
    </source>
</evidence>
<reference key="1">
    <citation type="submission" date="2006-08" db="EMBL/GenBank/DDBJ databases">
        <authorList>
            <consortium name="NIH - Mammalian Gene Collection (MGC) project"/>
        </authorList>
    </citation>
    <scope>NUCLEOTIDE SEQUENCE [LARGE SCALE MRNA]</scope>
    <source>
        <strain>Hereford</strain>
        <tissue>Thalamus</tissue>
    </source>
</reference>
<proteinExistence type="evidence at transcript level"/>
<organism>
    <name type="scientific">Bos taurus</name>
    <name type="common">Bovine</name>
    <dbReference type="NCBI Taxonomy" id="9913"/>
    <lineage>
        <taxon>Eukaryota</taxon>
        <taxon>Metazoa</taxon>
        <taxon>Chordata</taxon>
        <taxon>Craniata</taxon>
        <taxon>Vertebrata</taxon>
        <taxon>Euteleostomi</taxon>
        <taxon>Mammalia</taxon>
        <taxon>Eutheria</taxon>
        <taxon>Laurasiatheria</taxon>
        <taxon>Artiodactyla</taxon>
        <taxon>Ruminantia</taxon>
        <taxon>Pecora</taxon>
        <taxon>Bovidae</taxon>
        <taxon>Bovinae</taxon>
        <taxon>Bos</taxon>
    </lineage>
</organism>
<feature type="chain" id="PRO_0000316536" description="Fibronectin type III and SPRY domain-containing protein 1">
    <location>
        <begin position="1"/>
        <end position="496"/>
    </location>
</feature>
<feature type="domain" description="COS" evidence="7">
    <location>
        <begin position="105"/>
        <end position="162"/>
    </location>
</feature>
<feature type="domain" description="Fibronectin type-III" evidence="5">
    <location>
        <begin position="164"/>
        <end position="268"/>
    </location>
</feature>
<feature type="domain" description="B30.2/SPRY" evidence="6">
    <location>
        <begin position="268"/>
        <end position="477"/>
    </location>
</feature>
<feature type="region of interest" description="Disordered" evidence="8">
    <location>
        <begin position="301"/>
        <end position="336"/>
    </location>
</feature>
<feature type="coiled-coil region" evidence="4">
    <location>
        <begin position="4"/>
        <end position="99"/>
    </location>
</feature>
<feature type="modified residue" description="Omega-N-methylarginine" evidence="2">
    <location>
        <position position="310"/>
    </location>
</feature>
<feature type="modified residue" description="Omega-N-methylarginine" evidence="3">
    <location>
        <position position="320"/>
    </location>
</feature>